<accession>Q9Z6M4</accession>
<accession>Q9JQ99</accession>
<feature type="chain" id="PRO_0000138823" description="Shikimate biosynthesis protein AroDE">
    <location>
        <begin position="1"/>
        <end position="477"/>
    </location>
</feature>
<feature type="region of interest" description="3-dehydroquinate dehydratase" evidence="3">
    <location>
        <begin position="1"/>
        <end position="209"/>
    </location>
</feature>
<feature type="region of interest" description="Shikimate 5-dehydrogenase" evidence="3">
    <location>
        <begin position="210"/>
        <end position="477"/>
    </location>
</feature>
<feature type="active site" description="Proton donor/acceptor; for 3-dehydroquinate dehydratase activity" evidence="2">
    <location>
        <position position="111"/>
    </location>
</feature>
<feature type="active site" description="Schiff-base intermediate with substrate; for 3-dehydroquinate dehydratase activity" evidence="2">
    <location>
        <position position="134"/>
    </location>
</feature>
<feature type="active site" description="Proton acceptor; for shikimate dehydrogenase activity" evidence="1">
    <location>
        <position position="279"/>
    </location>
</feature>
<feature type="binding site" evidence="2">
    <location>
        <position position="21"/>
    </location>
    <ligand>
        <name>3-dehydroquinate</name>
        <dbReference type="ChEBI" id="CHEBI:32364"/>
    </ligand>
</feature>
<feature type="binding site" evidence="2">
    <location>
        <begin position="29"/>
        <end position="31"/>
    </location>
    <ligand>
        <name>3-dehydroquinate</name>
        <dbReference type="ChEBI" id="CHEBI:32364"/>
    </ligand>
</feature>
<feature type="binding site" evidence="2">
    <location>
        <begin position="56"/>
        <end position="58"/>
    </location>
    <ligand>
        <name>3-dehydroquinate</name>
        <dbReference type="ChEBI" id="CHEBI:32364"/>
    </ligand>
</feature>
<feature type="binding site" evidence="2">
    <location>
        <position position="172"/>
    </location>
    <ligand>
        <name>3-dehydroquinate</name>
        <dbReference type="ChEBI" id="CHEBI:32364"/>
    </ligand>
</feature>
<feature type="binding site" evidence="2">
    <location>
        <position position="197"/>
    </location>
    <ligand>
        <name>3-dehydroquinate</name>
        <dbReference type="ChEBI" id="CHEBI:32364"/>
    </ligand>
</feature>
<feature type="binding site" evidence="1">
    <location>
        <begin position="228"/>
        <end position="230"/>
    </location>
    <ligand>
        <name>shikimate</name>
        <dbReference type="ChEBI" id="CHEBI:36208"/>
    </ligand>
</feature>
<feature type="binding site" evidence="1">
    <location>
        <position position="300"/>
    </location>
    <ligand>
        <name>shikimate</name>
        <dbReference type="ChEBI" id="CHEBI:36208"/>
    </ligand>
</feature>
<feature type="binding site" evidence="1">
    <location>
        <position position="315"/>
    </location>
    <ligand>
        <name>shikimate</name>
        <dbReference type="ChEBI" id="CHEBI:36208"/>
    </ligand>
</feature>
<feature type="binding site" evidence="1">
    <location>
        <begin position="339"/>
        <end position="343"/>
    </location>
    <ligand>
        <name>NADP(+)</name>
        <dbReference type="ChEBI" id="CHEBI:58349"/>
    </ligand>
</feature>
<feature type="binding site" evidence="1">
    <location>
        <begin position="362"/>
        <end position="364"/>
    </location>
    <ligand>
        <name>NADP(+)</name>
        <dbReference type="ChEBI" id="CHEBI:58349"/>
    </ligand>
</feature>
<feature type="binding site" evidence="1">
    <location>
        <position position="438"/>
    </location>
    <ligand>
        <name>NADP(+)</name>
        <dbReference type="ChEBI" id="CHEBI:58349"/>
    </ligand>
</feature>
<feature type="binding site" evidence="1">
    <location>
        <position position="445"/>
    </location>
    <ligand>
        <name>shikimate</name>
        <dbReference type="ChEBI" id="CHEBI:36208"/>
    </ligand>
</feature>
<proteinExistence type="inferred from homology"/>
<comment type="function">
    <text evidence="1 2">Bifunctional enzyme that catalyzes two sequential steps of the aromatic amino acids biosynthetic pathway. In the first reaction, the AroD domain catalyzes the cis-dehydration of 3-dehydroquinate (DHQ) and introduces the first double bond of the aromatic ring to yield 3-dehydroshikimate; in the second reaction, the AroE domain catalyzes the reversible NADPH linked reduction of 3-dehydroshikimate (DHSA) to yield shikimate (SA).</text>
</comment>
<comment type="catalytic activity">
    <reaction evidence="2">
        <text>3-dehydroquinate = 3-dehydroshikimate + H2O</text>
        <dbReference type="Rhea" id="RHEA:21096"/>
        <dbReference type="ChEBI" id="CHEBI:15377"/>
        <dbReference type="ChEBI" id="CHEBI:16630"/>
        <dbReference type="ChEBI" id="CHEBI:32364"/>
        <dbReference type="EC" id="4.2.1.10"/>
    </reaction>
</comment>
<comment type="catalytic activity">
    <reaction evidence="1">
        <text>shikimate + NADP(+) = 3-dehydroshikimate + NADPH + H(+)</text>
        <dbReference type="Rhea" id="RHEA:17737"/>
        <dbReference type="ChEBI" id="CHEBI:15378"/>
        <dbReference type="ChEBI" id="CHEBI:16630"/>
        <dbReference type="ChEBI" id="CHEBI:36208"/>
        <dbReference type="ChEBI" id="CHEBI:57783"/>
        <dbReference type="ChEBI" id="CHEBI:58349"/>
        <dbReference type="EC" id="1.1.1.25"/>
    </reaction>
</comment>
<comment type="pathway">
    <text evidence="2">Metabolic intermediate biosynthesis; chorismate biosynthesis; chorismate from D-erythrose 4-phosphate and phosphoenolpyruvate: step 3/7.</text>
</comment>
<comment type="pathway">
    <text evidence="1">Metabolic intermediate biosynthesis; chorismate biosynthesis; chorismate from D-erythrose 4-phosphate and phosphoenolpyruvate: step 4/7.</text>
</comment>
<comment type="similarity">
    <text evidence="2">In the N-terminal section; belongs to the type-I 3-dehydroquinase family.</text>
</comment>
<comment type="similarity">
    <text evidence="1">In the C-terminal section; belongs to the shikimate dehydrogenase family.</text>
</comment>
<comment type="sequence caution" evidence="3">
    <conflict type="erroneous initiation">
        <sequence resource="EMBL-CDS" id="AAP99004"/>
    </conflict>
    <text>Extended N-terminus.</text>
</comment>
<keyword id="KW-0028">Amino-acid biosynthesis</keyword>
<keyword id="KW-0057">Aromatic amino acid biosynthesis</keyword>
<keyword id="KW-0456">Lyase</keyword>
<keyword id="KW-0511">Multifunctional enzyme</keyword>
<keyword id="KW-0521">NADP</keyword>
<keyword id="KW-0560">Oxidoreductase</keyword>
<keyword id="KW-0704">Schiff base</keyword>
<organism>
    <name type="scientific">Chlamydia pneumoniae</name>
    <name type="common">Chlamydophila pneumoniae</name>
    <dbReference type="NCBI Taxonomy" id="83558"/>
    <lineage>
        <taxon>Bacteria</taxon>
        <taxon>Pseudomonadati</taxon>
        <taxon>Chlamydiota</taxon>
        <taxon>Chlamydiia</taxon>
        <taxon>Chlamydiales</taxon>
        <taxon>Chlamydiaceae</taxon>
        <taxon>Chlamydia/Chlamydophila group</taxon>
        <taxon>Chlamydia</taxon>
    </lineage>
</organism>
<evidence type="ECO:0000250" key="1">
    <source>
        <dbReference type="UniProtKB" id="O67049"/>
    </source>
</evidence>
<evidence type="ECO:0000250" key="2">
    <source>
        <dbReference type="UniProtKB" id="P58687"/>
    </source>
</evidence>
<evidence type="ECO:0000305" key="3"/>
<gene>
    <name evidence="1" type="primary">aroE</name>
    <name evidence="2" type="synonym">aroD</name>
    <name type="ordered locus">CPn_1035</name>
    <name type="ordered locus">CP_0817</name>
    <name type="ordered locus">CpB1075</name>
</gene>
<reference key="1">
    <citation type="journal article" date="1999" name="Nat. Genet.">
        <title>Comparative genomes of Chlamydia pneumoniae and C. trachomatis.</title>
        <authorList>
            <person name="Kalman S."/>
            <person name="Mitchell W.P."/>
            <person name="Marathe R."/>
            <person name="Lammel C.J."/>
            <person name="Fan J."/>
            <person name="Hyman R.W."/>
            <person name="Olinger L."/>
            <person name="Grimwood J."/>
            <person name="Davis R.W."/>
            <person name="Stephens R.S."/>
        </authorList>
    </citation>
    <scope>NUCLEOTIDE SEQUENCE [LARGE SCALE GENOMIC DNA]</scope>
    <source>
        <strain>CWL029</strain>
    </source>
</reference>
<reference key="2">
    <citation type="journal article" date="2000" name="Nucleic Acids Res.">
        <title>Genome sequences of Chlamydia trachomatis MoPn and Chlamydia pneumoniae AR39.</title>
        <authorList>
            <person name="Read T.D."/>
            <person name="Brunham R.C."/>
            <person name="Shen C."/>
            <person name="Gill S.R."/>
            <person name="Heidelberg J.F."/>
            <person name="White O."/>
            <person name="Hickey E.K."/>
            <person name="Peterson J.D."/>
            <person name="Utterback T.R."/>
            <person name="Berry K.J."/>
            <person name="Bass S."/>
            <person name="Linher K.D."/>
            <person name="Weidman J.F."/>
            <person name="Khouri H.M."/>
            <person name="Craven B."/>
            <person name="Bowman C."/>
            <person name="Dodson R.J."/>
            <person name="Gwinn M.L."/>
            <person name="Nelson W.C."/>
            <person name="DeBoy R.T."/>
            <person name="Kolonay J.F."/>
            <person name="McClarty G."/>
            <person name="Salzberg S.L."/>
            <person name="Eisen J.A."/>
            <person name="Fraser C.M."/>
        </authorList>
    </citation>
    <scope>NUCLEOTIDE SEQUENCE [LARGE SCALE GENOMIC DNA]</scope>
    <source>
        <strain>AR39</strain>
    </source>
</reference>
<reference key="3">
    <citation type="journal article" date="2000" name="Nucleic Acids Res.">
        <title>Comparison of whole genome sequences of Chlamydia pneumoniae J138 from Japan and CWL029 from USA.</title>
        <authorList>
            <person name="Shirai M."/>
            <person name="Hirakawa H."/>
            <person name="Kimoto M."/>
            <person name="Tabuchi M."/>
            <person name="Kishi F."/>
            <person name="Ouchi K."/>
            <person name="Shiba T."/>
            <person name="Ishii K."/>
            <person name="Hattori M."/>
            <person name="Kuhara S."/>
            <person name="Nakazawa T."/>
        </authorList>
    </citation>
    <scope>NUCLEOTIDE SEQUENCE [LARGE SCALE GENOMIC DNA]</scope>
    <source>
        <strain>J138</strain>
    </source>
</reference>
<reference key="4">
    <citation type="submission" date="2002-05" db="EMBL/GenBank/DDBJ databases">
        <title>The genome sequence of Chlamydia pneumoniae TW183 and comparison with other Chlamydia strains based on whole genome sequence analysis.</title>
        <authorList>
            <person name="Geng M.M."/>
            <person name="Schuhmacher A."/>
            <person name="Muehldorfer I."/>
            <person name="Bensch K.W."/>
            <person name="Schaefer K.P."/>
            <person name="Schneider S."/>
            <person name="Pohl T."/>
            <person name="Essig A."/>
            <person name="Marre R."/>
            <person name="Melchers K."/>
        </authorList>
    </citation>
    <scope>NUCLEOTIDE SEQUENCE [LARGE SCALE GENOMIC DNA]</scope>
    <source>
        <strain>TW-183</strain>
    </source>
</reference>
<dbReference type="EC" id="4.2.1.10" evidence="2"/>
<dbReference type="EC" id="1.1.1.25" evidence="1"/>
<dbReference type="EMBL" id="AE001363">
    <property type="protein sequence ID" value="AAD19172.1"/>
    <property type="molecule type" value="Genomic_DNA"/>
</dbReference>
<dbReference type="EMBL" id="AE002161">
    <property type="protein sequence ID" value="AAF38612.1"/>
    <property type="molecule type" value="Genomic_DNA"/>
</dbReference>
<dbReference type="EMBL" id="BA000008">
    <property type="protein sequence ID" value="BAA99242.1"/>
    <property type="molecule type" value="Genomic_DNA"/>
</dbReference>
<dbReference type="EMBL" id="AE009440">
    <property type="protein sequence ID" value="AAP99004.1"/>
    <property type="status" value="ALT_INIT"/>
    <property type="molecule type" value="Genomic_DNA"/>
</dbReference>
<dbReference type="PIR" id="G72003">
    <property type="entry name" value="G72003"/>
</dbReference>
<dbReference type="PIR" id="H86619">
    <property type="entry name" value="H86619"/>
</dbReference>
<dbReference type="RefSeq" id="NP_225229.1">
    <property type="nucleotide sequence ID" value="NC_000922.1"/>
</dbReference>
<dbReference type="RefSeq" id="WP_010883668.1">
    <property type="nucleotide sequence ID" value="NZ_LN847257.1"/>
</dbReference>
<dbReference type="SMR" id="Q9Z6M4"/>
<dbReference type="STRING" id="406984.CPK_ORF00462"/>
<dbReference type="GeneID" id="45051093"/>
<dbReference type="KEGG" id="cpa:CP_0817"/>
<dbReference type="KEGG" id="cpj:aroE"/>
<dbReference type="KEGG" id="cpn:CPn_1035"/>
<dbReference type="KEGG" id="cpt:CpB1075"/>
<dbReference type="PATRIC" id="fig|115713.3.peg.1133"/>
<dbReference type="eggNOG" id="COG0169">
    <property type="taxonomic scope" value="Bacteria"/>
</dbReference>
<dbReference type="eggNOG" id="COG0710">
    <property type="taxonomic scope" value="Bacteria"/>
</dbReference>
<dbReference type="HOGENOM" id="CLU_019120_1_1_0"/>
<dbReference type="OrthoDB" id="9792692at2"/>
<dbReference type="UniPathway" id="UPA00053">
    <property type="reaction ID" value="UER00086"/>
</dbReference>
<dbReference type="UniPathway" id="UPA00053">
    <property type="reaction ID" value="UER00087"/>
</dbReference>
<dbReference type="Proteomes" id="UP000000583">
    <property type="component" value="Chromosome"/>
</dbReference>
<dbReference type="Proteomes" id="UP000000801">
    <property type="component" value="Chromosome"/>
</dbReference>
<dbReference type="GO" id="GO:0003855">
    <property type="term" value="F:3-dehydroquinate dehydratase activity"/>
    <property type="evidence" value="ECO:0000250"/>
    <property type="project" value="UniProtKB"/>
</dbReference>
<dbReference type="GO" id="GO:0050661">
    <property type="term" value="F:NADP binding"/>
    <property type="evidence" value="ECO:0000250"/>
    <property type="project" value="UniProtKB"/>
</dbReference>
<dbReference type="GO" id="GO:0004764">
    <property type="term" value="F:shikimate 3-dehydrogenase (NADP+) activity"/>
    <property type="evidence" value="ECO:0000250"/>
    <property type="project" value="UniProtKB"/>
</dbReference>
<dbReference type="GO" id="GO:0008652">
    <property type="term" value="P:amino acid biosynthetic process"/>
    <property type="evidence" value="ECO:0007669"/>
    <property type="project" value="UniProtKB-KW"/>
</dbReference>
<dbReference type="GO" id="GO:0009073">
    <property type="term" value="P:aromatic amino acid family biosynthetic process"/>
    <property type="evidence" value="ECO:0007669"/>
    <property type="project" value="UniProtKB-KW"/>
</dbReference>
<dbReference type="GO" id="GO:0009423">
    <property type="term" value="P:chorismate biosynthetic process"/>
    <property type="evidence" value="ECO:0000250"/>
    <property type="project" value="UniProtKB"/>
</dbReference>
<dbReference type="GO" id="GO:0019632">
    <property type="term" value="P:shikimate metabolic process"/>
    <property type="evidence" value="ECO:0000250"/>
    <property type="project" value="UniProtKB"/>
</dbReference>
<dbReference type="CDD" id="cd00502">
    <property type="entry name" value="DHQase_I"/>
    <property type="match status" value="1"/>
</dbReference>
<dbReference type="CDD" id="cd01065">
    <property type="entry name" value="NAD_bind_Shikimate_DH"/>
    <property type="match status" value="1"/>
</dbReference>
<dbReference type="Gene3D" id="3.20.20.70">
    <property type="entry name" value="Aldolase class I"/>
    <property type="match status" value="1"/>
</dbReference>
<dbReference type="Gene3D" id="3.40.50.10860">
    <property type="entry name" value="Leucine Dehydrogenase, chain A, domain 1"/>
    <property type="match status" value="1"/>
</dbReference>
<dbReference type="Gene3D" id="3.40.50.720">
    <property type="entry name" value="NAD(P)-binding Rossmann-like Domain"/>
    <property type="match status" value="1"/>
</dbReference>
<dbReference type="HAMAP" id="MF_00214">
    <property type="entry name" value="AroD"/>
    <property type="match status" value="1"/>
</dbReference>
<dbReference type="HAMAP" id="MF_00222">
    <property type="entry name" value="Shikimate_DH_AroE"/>
    <property type="match status" value="1"/>
</dbReference>
<dbReference type="InterPro" id="IPR013785">
    <property type="entry name" value="Aldolase_TIM"/>
</dbReference>
<dbReference type="InterPro" id="IPR046346">
    <property type="entry name" value="Aminoacid_DH-like_N_sf"/>
</dbReference>
<dbReference type="InterPro" id="IPR001381">
    <property type="entry name" value="DHquinase_I"/>
</dbReference>
<dbReference type="InterPro" id="IPR036291">
    <property type="entry name" value="NAD(P)-bd_dom_sf"/>
</dbReference>
<dbReference type="InterPro" id="IPR011342">
    <property type="entry name" value="Shikimate_DH"/>
</dbReference>
<dbReference type="InterPro" id="IPR013708">
    <property type="entry name" value="Shikimate_DH-bd_N"/>
</dbReference>
<dbReference type="InterPro" id="IPR022893">
    <property type="entry name" value="Shikimate_DH_fam"/>
</dbReference>
<dbReference type="InterPro" id="IPR006151">
    <property type="entry name" value="Shikm_DH/Glu-tRNA_Rdtase"/>
</dbReference>
<dbReference type="NCBIfam" id="TIGR00507">
    <property type="entry name" value="aroE"/>
    <property type="match status" value="1"/>
</dbReference>
<dbReference type="NCBIfam" id="NF006802">
    <property type="entry name" value="PRK09310.1"/>
    <property type="match status" value="1"/>
</dbReference>
<dbReference type="PANTHER" id="PTHR21089:SF1">
    <property type="entry name" value="BIFUNCTIONAL 3-DEHYDROQUINATE DEHYDRATASE_SHIKIMATE DEHYDROGENASE, CHLOROPLASTIC"/>
    <property type="match status" value="1"/>
</dbReference>
<dbReference type="PANTHER" id="PTHR21089">
    <property type="entry name" value="SHIKIMATE DEHYDROGENASE"/>
    <property type="match status" value="1"/>
</dbReference>
<dbReference type="Pfam" id="PF01487">
    <property type="entry name" value="DHquinase_I"/>
    <property type="match status" value="1"/>
</dbReference>
<dbReference type="Pfam" id="PF01488">
    <property type="entry name" value="Shikimate_DH"/>
    <property type="match status" value="1"/>
</dbReference>
<dbReference type="Pfam" id="PF08501">
    <property type="entry name" value="Shikimate_dh_N"/>
    <property type="match status" value="1"/>
</dbReference>
<dbReference type="SUPFAM" id="SSF51569">
    <property type="entry name" value="Aldolase"/>
    <property type="match status" value="1"/>
</dbReference>
<dbReference type="SUPFAM" id="SSF53223">
    <property type="entry name" value="Aminoacid dehydrogenase-like, N-terminal domain"/>
    <property type="match status" value="1"/>
</dbReference>
<dbReference type="SUPFAM" id="SSF51735">
    <property type="entry name" value="NAD(P)-binding Rossmann-fold domains"/>
    <property type="match status" value="1"/>
</dbReference>
<sequence>MLCATVSGPSFCEAKQQILKSLHLVDIIELRLDLINELDDQELHTLITTAQNPILTFRQHKEMSTALWIQKLYSLAKLEPKWMDIDVSLPKTALQTIRKSHPKIKLILSYHTDKNEDLDAIYNEMLATPAEIYKIVLSPENSSEALNYIKKARLLPKPSTVLCMGTHGLPSRVLSPLISNAMNYAAGISAPQVAPGQPKLEELLSYNYSKLSEKSHIYGLIGDPVDRSISHLSHNFLLSKLSLNATYIKFPVTIGEVVTFFSAIRDLPFSGLSVTMPLKTAIFDHVDALDASAQLCESINTLVFRNQKILGYNTDGEGVAKLLKQKNISVNNKHIAIVGAGGAAKAIAATLAMQGANLHIFNRTLSSAAALATCCKGKAYPLGSLENFKTIDIIINCLPPEVTFPWRFPPIVMDINTKPHPSPYLERAQKHGSLIIHGYEMFIEQALLQFALWFPDFLTPESCDSFRNYVKNFMAKV</sequence>
<name>ARODE_CHLPN</name>
<protein>
    <recommendedName>
        <fullName evidence="3">Shikimate biosynthesis protein AroDE</fullName>
    </recommendedName>
    <domain>
        <recommendedName>
            <fullName evidence="2">3-dehydroquinate dehydratase</fullName>
            <shortName evidence="2">3-dehydroquinase</shortName>
            <ecNumber evidence="2">4.2.1.10</ecNumber>
        </recommendedName>
        <alternativeName>
            <fullName evidence="2">Type I DHQase</fullName>
        </alternativeName>
        <alternativeName>
            <fullName evidence="2">Type I dehydroquinase</fullName>
            <shortName evidence="2">DHQ1</shortName>
        </alternativeName>
    </domain>
    <domain>
        <recommendedName>
            <fullName evidence="1">Shikimate dehydrogenase (NADP(+))</fullName>
            <shortName evidence="1">SDH</shortName>
            <ecNumber evidence="1">1.1.1.25</ecNumber>
        </recommendedName>
    </domain>
</protein>